<dbReference type="EMBL" id="CU928164">
    <property type="protein sequence ID" value="CAR20413.1"/>
    <property type="molecule type" value="Genomic_DNA"/>
</dbReference>
<dbReference type="RefSeq" id="WP_000831330.1">
    <property type="nucleotide sequence ID" value="NC_011750.1"/>
</dbReference>
<dbReference type="RefSeq" id="YP_002410181.1">
    <property type="nucleotide sequence ID" value="NC_011750.1"/>
</dbReference>
<dbReference type="SMR" id="B7NR05"/>
<dbReference type="STRING" id="585057.ECIAI39_4307"/>
<dbReference type="GeneID" id="98190980"/>
<dbReference type="KEGG" id="ect:ECIAI39_4307"/>
<dbReference type="PATRIC" id="fig|585057.6.peg.4453"/>
<dbReference type="HOGENOM" id="CLU_129938_2_1_6"/>
<dbReference type="Proteomes" id="UP000000749">
    <property type="component" value="Chromosome"/>
</dbReference>
<dbReference type="GO" id="GO:1990904">
    <property type="term" value="C:ribonucleoprotein complex"/>
    <property type="evidence" value="ECO:0007669"/>
    <property type="project" value="UniProtKB-KW"/>
</dbReference>
<dbReference type="GO" id="GO:0005840">
    <property type="term" value="C:ribosome"/>
    <property type="evidence" value="ECO:0007669"/>
    <property type="project" value="UniProtKB-KW"/>
</dbReference>
<dbReference type="GO" id="GO:0003735">
    <property type="term" value="F:structural constituent of ribosome"/>
    <property type="evidence" value="ECO:0007669"/>
    <property type="project" value="InterPro"/>
</dbReference>
<dbReference type="GO" id="GO:0006412">
    <property type="term" value="P:translation"/>
    <property type="evidence" value="ECO:0007669"/>
    <property type="project" value="UniProtKB-UniRule"/>
</dbReference>
<dbReference type="FunFam" id="1.10.287.3980:FF:000001">
    <property type="entry name" value="Mitochondrial ribosomal protein L34"/>
    <property type="match status" value="1"/>
</dbReference>
<dbReference type="Gene3D" id="1.10.287.3980">
    <property type="match status" value="1"/>
</dbReference>
<dbReference type="HAMAP" id="MF_00391">
    <property type="entry name" value="Ribosomal_bL34"/>
    <property type="match status" value="1"/>
</dbReference>
<dbReference type="InterPro" id="IPR000271">
    <property type="entry name" value="Ribosomal_bL34"/>
</dbReference>
<dbReference type="InterPro" id="IPR020939">
    <property type="entry name" value="Ribosomal_bL34_CS"/>
</dbReference>
<dbReference type="NCBIfam" id="TIGR01030">
    <property type="entry name" value="rpmH_bact"/>
    <property type="match status" value="1"/>
</dbReference>
<dbReference type="PANTHER" id="PTHR14503:SF4">
    <property type="entry name" value="LARGE RIBOSOMAL SUBUNIT PROTEIN BL34M"/>
    <property type="match status" value="1"/>
</dbReference>
<dbReference type="PANTHER" id="PTHR14503">
    <property type="entry name" value="MITOCHONDRIAL RIBOSOMAL PROTEIN 34 FAMILY MEMBER"/>
    <property type="match status" value="1"/>
</dbReference>
<dbReference type="Pfam" id="PF00468">
    <property type="entry name" value="Ribosomal_L34"/>
    <property type="match status" value="1"/>
</dbReference>
<dbReference type="PROSITE" id="PS00784">
    <property type="entry name" value="RIBOSOMAL_L34"/>
    <property type="match status" value="1"/>
</dbReference>
<accession>B7NR05</accession>
<comment type="similarity">
    <text evidence="1">Belongs to the bacterial ribosomal protein bL34 family.</text>
</comment>
<gene>
    <name evidence="1" type="primary">rpmH</name>
    <name type="ordered locus">ECIAI39_4307</name>
</gene>
<keyword id="KW-0687">Ribonucleoprotein</keyword>
<keyword id="KW-0689">Ribosomal protein</keyword>
<sequence length="46" mass="5380">MKRTFQPSVLKRNRSHGFRARMATKNGRQVLARRRAKGRARLTVSK</sequence>
<protein>
    <recommendedName>
        <fullName evidence="1">Large ribosomal subunit protein bL34</fullName>
    </recommendedName>
    <alternativeName>
        <fullName evidence="2">50S ribosomal protein L34</fullName>
    </alternativeName>
</protein>
<feature type="chain" id="PRO_1000196048" description="Large ribosomal subunit protein bL34">
    <location>
        <begin position="1"/>
        <end position="46"/>
    </location>
</feature>
<organism>
    <name type="scientific">Escherichia coli O7:K1 (strain IAI39 / ExPEC)</name>
    <dbReference type="NCBI Taxonomy" id="585057"/>
    <lineage>
        <taxon>Bacteria</taxon>
        <taxon>Pseudomonadati</taxon>
        <taxon>Pseudomonadota</taxon>
        <taxon>Gammaproteobacteria</taxon>
        <taxon>Enterobacterales</taxon>
        <taxon>Enterobacteriaceae</taxon>
        <taxon>Escherichia</taxon>
    </lineage>
</organism>
<reference key="1">
    <citation type="journal article" date="2009" name="PLoS Genet.">
        <title>Organised genome dynamics in the Escherichia coli species results in highly diverse adaptive paths.</title>
        <authorList>
            <person name="Touchon M."/>
            <person name="Hoede C."/>
            <person name="Tenaillon O."/>
            <person name="Barbe V."/>
            <person name="Baeriswyl S."/>
            <person name="Bidet P."/>
            <person name="Bingen E."/>
            <person name="Bonacorsi S."/>
            <person name="Bouchier C."/>
            <person name="Bouvet O."/>
            <person name="Calteau A."/>
            <person name="Chiapello H."/>
            <person name="Clermont O."/>
            <person name="Cruveiller S."/>
            <person name="Danchin A."/>
            <person name="Diard M."/>
            <person name="Dossat C."/>
            <person name="Karoui M.E."/>
            <person name="Frapy E."/>
            <person name="Garry L."/>
            <person name="Ghigo J.M."/>
            <person name="Gilles A.M."/>
            <person name="Johnson J."/>
            <person name="Le Bouguenec C."/>
            <person name="Lescat M."/>
            <person name="Mangenot S."/>
            <person name="Martinez-Jehanne V."/>
            <person name="Matic I."/>
            <person name="Nassif X."/>
            <person name="Oztas S."/>
            <person name="Petit M.A."/>
            <person name="Pichon C."/>
            <person name="Rouy Z."/>
            <person name="Ruf C.S."/>
            <person name="Schneider D."/>
            <person name="Tourret J."/>
            <person name="Vacherie B."/>
            <person name="Vallenet D."/>
            <person name="Medigue C."/>
            <person name="Rocha E.P.C."/>
            <person name="Denamur E."/>
        </authorList>
    </citation>
    <scope>NUCLEOTIDE SEQUENCE [LARGE SCALE GENOMIC DNA]</scope>
    <source>
        <strain>IAI39 / ExPEC</strain>
    </source>
</reference>
<name>RL34_ECO7I</name>
<evidence type="ECO:0000255" key="1">
    <source>
        <dbReference type="HAMAP-Rule" id="MF_00391"/>
    </source>
</evidence>
<evidence type="ECO:0000305" key="2"/>
<proteinExistence type="inferred from homology"/>